<feature type="chain" id="PRO_0000147284" description="Dihydroorotase-like protein">
    <location>
        <begin position="1"/>
        <end position="423"/>
    </location>
</feature>
<feature type="sequence conflict" description="In Ref. 1; AAA25977." evidence="2" ref="1">
    <original>P</original>
    <variation>A</variation>
    <location>
        <position position="55"/>
    </location>
</feature>
<feature type="sequence conflict" description="In Ref. 1; AAA25977." evidence="2" ref="1">
    <original>K</original>
    <variation>N</variation>
    <location>
        <position position="296"/>
    </location>
</feature>
<feature type="sequence conflict" description="In Ref. 1; AAA25977." evidence="2" ref="1">
    <original>A</original>
    <variation>P</variation>
    <location>
        <position position="312"/>
    </location>
</feature>
<protein>
    <recommendedName>
        <fullName>Dihydroorotase-like protein</fullName>
    </recommendedName>
    <alternativeName>
        <fullName>Aspartate carbamoyltransferase 44 kDa non-catalytic chain</fullName>
    </alternativeName>
</protein>
<sequence length="423" mass="44150">MTISIRGARVIDPASDLDQVGDLHIEAGKIVAIGAAPAGFSAQKTLDGAGLVAAPGLVDLSVALREPGYGRKGNVESETRAAAAGGTTSLCCPPYTRPVLDTPAVAELILDRAREAGNAKVYPIGALTRGFGGEQLSELVALRDTGCVAFTNGLHGFASNRILRRALEYAATFDLTVIFTSQDTDLAEGGLAHEGPTASFLGLAGIPETAETVALARNLLLVEQSGVRAHFSQLTSARGIELVAQAQARGLPVTCDVALYQLILTDEALVGFSSLYHVQPPLRTRADREALREAVKNGVVQAIASHHQPHEADAKNAPFAATEPGISGAELLLPLAMTLVQDGLLDLPTLLARLSHGPAQALRLPAGRLAVGQAADLVLFDPQGSTLAGESWYSKGQNSPFVGHCLPGRVRYTLVDGHLTHEG</sequence>
<reference key="1">
    <citation type="submission" date="1993-06" db="EMBL/GenBank/DDBJ databases">
        <title>Nucleotide sequence of the gene coding for dihydroorotase-like polypeptide from Pseudomonas aeruginosa.</title>
        <authorList>
            <person name="Vickrey J.F."/>
            <person name="Schurr M.J."/>
            <person name="Benjamin R.C."/>
            <person name="Cunin R."/>
            <person name="Shanley M.S."/>
            <person name="O'Donovan G.A."/>
        </authorList>
    </citation>
    <scope>NUCLEOTIDE SEQUENCE [GENOMIC DNA]</scope>
    <source>
        <strain>ATCC 15692 / DSM 22644 / CIP 104116 / JCM 14847 / LMG 12228 / 1C / PRS 101 / PAO1</strain>
    </source>
</reference>
<reference key="2">
    <citation type="journal article" date="2000" name="Nature">
        <title>Complete genome sequence of Pseudomonas aeruginosa PAO1, an opportunistic pathogen.</title>
        <authorList>
            <person name="Stover C.K."/>
            <person name="Pham X.-Q.T."/>
            <person name="Erwin A.L."/>
            <person name="Mizoguchi S.D."/>
            <person name="Warrener P."/>
            <person name="Hickey M.J."/>
            <person name="Brinkman F.S.L."/>
            <person name="Hufnagle W.O."/>
            <person name="Kowalik D.J."/>
            <person name="Lagrou M."/>
            <person name="Garber R.L."/>
            <person name="Goltry L."/>
            <person name="Tolentino E."/>
            <person name="Westbrock-Wadman S."/>
            <person name="Yuan Y."/>
            <person name="Brody L.L."/>
            <person name="Coulter S.N."/>
            <person name="Folger K.R."/>
            <person name="Kas A."/>
            <person name="Larbig K."/>
            <person name="Lim R.M."/>
            <person name="Smith K.A."/>
            <person name="Spencer D.H."/>
            <person name="Wong G.K.-S."/>
            <person name="Wu Z."/>
            <person name="Paulsen I.T."/>
            <person name="Reizer J."/>
            <person name="Saier M.H. Jr."/>
            <person name="Hancock R.E.W."/>
            <person name="Lory S."/>
            <person name="Olson M.V."/>
        </authorList>
    </citation>
    <scope>NUCLEOTIDE SEQUENCE [LARGE SCALE GENOMIC DNA]</scope>
    <source>
        <strain>ATCC 15692 / DSM 22644 / CIP 104116 / JCM 14847 / LMG 12228 / 1C / PRS 101 / PAO1</strain>
    </source>
</reference>
<evidence type="ECO:0000250" key="1">
    <source>
        <dbReference type="UniProtKB" id="Q59712"/>
    </source>
</evidence>
<evidence type="ECO:0000305" key="2"/>
<name>PYRX_PSEAE</name>
<comment type="function">
    <text evidence="1">Non-functional DHOase.</text>
</comment>
<comment type="subunit">
    <text evidence="1">Heterododecamer of 6 active PyrB subunits and 6 non-catalytic PyrC' subunits.</text>
</comment>
<comment type="similarity">
    <text evidence="2">Belongs to the metallo-dependent hydrolases superfamily. DHOase family. PyrC' subfamily.</text>
</comment>
<dbReference type="EMBL" id="L19649">
    <property type="protein sequence ID" value="AAA25977.1"/>
    <property type="molecule type" value="Genomic_DNA"/>
</dbReference>
<dbReference type="EMBL" id="AE004091">
    <property type="protein sequence ID" value="AAG03790.1"/>
    <property type="molecule type" value="Genomic_DNA"/>
</dbReference>
<dbReference type="PIR" id="G83595">
    <property type="entry name" value="G83595"/>
</dbReference>
<dbReference type="RefSeq" id="NP_249092.1">
    <property type="nucleotide sequence ID" value="NC_002516.2"/>
</dbReference>
<dbReference type="RefSeq" id="WP_003114891.1">
    <property type="nucleotide sequence ID" value="NZ_QZGE01000016.1"/>
</dbReference>
<dbReference type="SMR" id="Q51551"/>
<dbReference type="STRING" id="208964.PA0401"/>
<dbReference type="PaxDb" id="208964-PA0401"/>
<dbReference type="GeneID" id="878275"/>
<dbReference type="KEGG" id="pae:PA0401"/>
<dbReference type="PATRIC" id="fig|208964.12.peg.422"/>
<dbReference type="PseudoCAP" id="PA0401"/>
<dbReference type="HOGENOM" id="CLU_015572_1_0_6"/>
<dbReference type="InParanoid" id="Q51551"/>
<dbReference type="OrthoDB" id="5687299at2"/>
<dbReference type="PhylomeDB" id="Q51551"/>
<dbReference type="BioCyc" id="PAER208964:G1FZ6-405-MONOMER"/>
<dbReference type="Proteomes" id="UP000002438">
    <property type="component" value="Chromosome"/>
</dbReference>
<dbReference type="GO" id="GO:0005737">
    <property type="term" value="C:cytoplasm"/>
    <property type="evidence" value="ECO:0000318"/>
    <property type="project" value="GO_Central"/>
</dbReference>
<dbReference type="GO" id="GO:0004038">
    <property type="term" value="F:allantoinase activity"/>
    <property type="evidence" value="ECO:0000318"/>
    <property type="project" value="GO_Central"/>
</dbReference>
<dbReference type="GO" id="GO:0004151">
    <property type="term" value="F:dihydroorotase activity"/>
    <property type="evidence" value="ECO:0007669"/>
    <property type="project" value="InterPro"/>
</dbReference>
<dbReference type="GO" id="GO:0046872">
    <property type="term" value="F:metal ion binding"/>
    <property type="evidence" value="ECO:0007669"/>
    <property type="project" value="InterPro"/>
</dbReference>
<dbReference type="GO" id="GO:0006145">
    <property type="term" value="P:purine nucleobase catabolic process"/>
    <property type="evidence" value="ECO:0000318"/>
    <property type="project" value="GO_Central"/>
</dbReference>
<dbReference type="GO" id="GO:0006221">
    <property type="term" value="P:pyrimidine nucleotide biosynthetic process"/>
    <property type="evidence" value="ECO:0007669"/>
    <property type="project" value="UniProtKB-KW"/>
</dbReference>
<dbReference type="CDD" id="cd01317">
    <property type="entry name" value="DHOase_IIa"/>
    <property type="match status" value="1"/>
</dbReference>
<dbReference type="Gene3D" id="3.20.20.140">
    <property type="entry name" value="Metal-dependent hydrolases"/>
    <property type="match status" value="1"/>
</dbReference>
<dbReference type="Gene3D" id="2.30.40.10">
    <property type="entry name" value="Urease, subunit C, domain 1"/>
    <property type="match status" value="1"/>
</dbReference>
<dbReference type="InterPro" id="IPR006680">
    <property type="entry name" value="Amidohydro-rel"/>
</dbReference>
<dbReference type="InterPro" id="IPR004722">
    <property type="entry name" value="DHOase"/>
</dbReference>
<dbReference type="InterPro" id="IPR050138">
    <property type="entry name" value="DHOase/Allantoinase_Hydrolase"/>
</dbReference>
<dbReference type="InterPro" id="IPR011059">
    <property type="entry name" value="Metal-dep_hydrolase_composite"/>
</dbReference>
<dbReference type="InterPro" id="IPR032466">
    <property type="entry name" value="Metal_Hydrolase"/>
</dbReference>
<dbReference type="NCBIfam" id="NF005791">
    <property type="entry name" value="PRK07627.1"/>
    <property type="match status" value="1"/>
</dbReference>
<dbReference type="NCBIfam" id="NF006838">
    <property type="entry name" value="PRK09357.1-3"/>
    <property type="match status" value="1"/>
</dbReference>
<dbReference type="NCBIfam" id="TIGR00857">
    <property type="entry name" value="pyrC_multi"/>
    <property type="match status" value="1"/>
</dbReference>
<dbReference type="PANTHER" id="PTHR43668">
    <property type="entry name" value="ALLANTOINASE"/>
    <property type="match status" value="1"/>
</dbReference>
<dbReference type="PANTHER" id="PTHR43668:SF2">
    <property type="entry name" value="ALLANTOINASE"/>
    <property type="match status" value="1"/>
</dbReference>
<dbReference type="Pfam" id="PF01979">
    <property type="entry name" value="Amidohydro_1"/>
    <property type="match status" value="1"/>
</dbReference>
<dbReference type="SUPFAM" id="SSF51338">
    <property type="entry name" value="Composite domain of metallo-dependent hydrolases"/>
    <property type="match status" value="1"/>
</dbReference>
<dbReference type="SUPFAM" id="SSF51556">
    <property type="entry name" value="Metallo-dependent hydrolases"/>
    <property type="match status" value="1"/>
</dbReference>
<organism>
    <name type="scientific">Pseudomonas aeruginosa (strain ATCC 15692 / DSM 22644 / CIP 104116 / JCM 14847 / LMG 12228 / 1C / PRS 101 / PAO1)</name>
    <dbReference type="NCBI Taxonomy" id="208964"/>
    <lineage>
        <taxon>Bacteria</taxon>
        <taxon>Pseudomonadati</taxon>
        <taxon>Pseudomonadota</taxon>
        <taxon>Gammaproteobacteria</taxon>
        <taxon>Pseudomonadales</taxon>
        <taxon>Pseudomonadaceae</taxon>
        <taxon>Pseudomonas</taxon>
    </lineage>
</organism>
<gene>
    <name type="primary">pyrC'</name>
    <name type="synonym">pyrX</name>
    <name type="ordered locus">PA0401</name>
</gene>
<accession>Q51551</accession>
<proteinExistence type="inferred from homology"/>
<keyword id="KW-0665">Pyrimidine biosynthesis</keyword>
<keyword id="KW-1185">Reference proteome</keyword>